<dbReference type="EC" id="1.1.1.282" evidence="1"/>
<dbReference type="EMBL" id="CU928162">
    <property type="protein sequence ID" value="CAR08084.2"/>
    <property type="molecule type" value="Genomic_DNA"/>
</dbReference>
<dbReference type="RefSeq" id="WP_000383469.1">
    <property type="nucleotide sequence ID" value="NC_011745.1"/>
</dbReference>
<dbReference type="SMR" id="B7MVG8"/>
<dbReference type="GeneID" id="75171755"/>
<dbReference type="KEGG" id="ecq:ECED1_1891"/>
<dbReference type="HOGENOM" id="CLU_044063_4_4_6"/>
<dbReference type="UniPathway" id="UPA00053">
    <property type="reaction ID" value="UER00087"/>
</dbReference>
<dbReference type="Proteomes" id="UP000000748">
    <property type="component" value="Chromosome"/>
</dbReference>
<dbReference type="GO" id="GO:0030266">
    <property type="term" value="F:quinate 3-dehydrogenase (NAD+) activity"/>
    <property type="evidence" value="ECO:0007669"/>
    <property type="project" value="UniProtKB-UniRule"/>
</dbReference>
<dbReference type="GO" id="GO:0052733">
    <property type="term" value="F:quinate 3-dehydrogenase (NADP+) activity"/>
    <property type="evidence" value="ECO:0007669"/>
    <property type="project" value="InterPro"/>
</dbReference>
<dbReference type="GO" id="GO:0052734">
    <property type="term" value="F:shikimate 3-dehydrogenase (NAD+) activity"/>
    <property type="evidence" value="ECO:0007669"/>
    <property type="project" value="InterPro"/>
</dbReference>
<dbReference type="GO" id="GO:0004764">
    <property type="term" value="F:shikimate 3-dehydrogenase (NADP+) activity"/>
    <property type="evidence" value="ECO:0007669"/>
    <property type="project" value="UniProtKB-UniRule"/>
</dbReference>
<dbReference type="GO" id="GO:0008652">
    <property type="term" value="P:amino acid biosynthetic process"/>
    <property type="evidence" value="ECO:0007669"/>
    <property type="project" value="UniProtKB-KW"/>
</dbReference>
<dbReference type="GO" id="GO:0009073">
    <property type="term" value="P:aromatic amino acid family biosynthetic process"/>
    <property type="evidence" value="ECO:0007669"/>
    <property type="project" value="UniProtKB-KW"/>
</dbReference>
<dbReference type="GO" id="GO:0009423">
    <property type="term" value="P:chorismate biosynthetic process"/>
    <property type="evidence" value="ECO:0007669"/>
    <property type="project" value="UniProtKB-UniRule"/>
</dbReference>
<dbReference type="GO" id="GO:0019632">
    <property type="term" value="P:shikimate metabolic process"/>
    <property type="evidence" value="ECO:0007669"/>
    <property type="project" value="TreeGrafter"/>
</dbReference>
<dbReference type="CDD" id="cd01065">
    <property type="entry name" value="NAD_bind_Shikimate_DH"/>
    <property type="match status" value="1"/>
</dbReference>
<dbReference type="FunFam" id="3.40.50.10860:FF:000004">
    <property type="entry name" value="Quinate/shikimate dehydrogenase"/>
    <property type="match status" value="1"/>
</dbReference>
<dbReference type="FunFam" id="3.40.50.720:FF:000086">
    <property type="entry name" value="Quinate/shikimate dehydrogenase"/>
    <property type="match status" value="1"/>
</dbReference>
<dbReference type="Gene3D" id="3.40.50.10860">
    <property type="entry name" value="Leucine Dehydrogenase, chain A, domain 1"/>
    <property type="match status" value="1"/>
</dbReference>
<dbReference type="Gene3D" id="3.40.50.720">
    <property type="entry name" value="NAD(P)-binding Rossmann-like Domain"/>
    <property type="match status" value="1"/>
</dbReference>
<dbReference type="HAMAP" id="MF_00222">
    <property type="entry name" value="Shikimate_DH_AroE"/>
    <property type="match status" value="1"/>
</dbReference>
<dbReference type="HAMAP" id="MF_01578">
    <property type="entry name" value="Shikimate_DH_YdiB"/>
    <property type="match status" value="1"/>
</dbReference>
<dbReference type="InterPro" id="IPR046346">
    <property type="entry name" value="Aminoacid_DH-like_N_sf"/>
</dbReference>
<dbReference type="InterPro" id="IPR036291">
    <property type="entry name" value="NAD(P)-bd_dom_sf"/>
</dbReference>
<dbReference type="InterPro" id="IPR022872">
    <property type="entry name" value="Quinate/Shikimate_DH"/>
</dbReference>
<dbReference type="InterPro" id="IPR041121">
    <property type="entry name" value="SDH_C"/>
</dbReference>
<dbReference type="InterPro" id="IPR013708">
    <property type="entry name" value="Shikimate_DH-bd_N"/>
</dbReference>
<dbReference type="InterPro" id="IPR022893">
    <property type="entry name" value="Shikimate_DH_fam"/>
</dbReference>
<dbReference type="NCBIfam" id="NF009390">
    <property type="entry name" value="PRK12749.1"/>
    <property type="match status" value="1"/>
</dbReference>
<dbReference type="PANTHER" id="PTHR21089:SF1">
    <property type="entry name" value="BIFUNCTIONAL 3-DEHYDROQUINATE DEHYDRATASE_SHIKIMATE DEHYDROGENASE, CHLOROPLASTIC"/>
    <property type="match status" value="1"/>
</dbReference>
<dbReference type="PANTHER" id="PTHR21089">
    <property type="entry name" value="SHIKIMATE DEHYDROGENASE"/>
    <property type="match status" value="1"/>
</dbReference>
<dbReference type="Pfam" id="PF18317">
    <property type="entry name" value="SDH_C"/>
    <property type="match status" value="1"/>
</dbReference>
<dbReference type="Pfam" id="PF08501">
    <property type="entry name" value="Shikimate_dh_N"/>
    <property type="match status" value="1"/>
</dbReference>
<dbReference type="SUPFAM" id="SSF53223">
    <property type="entry name" value="Aminoacid dehydrogenase-like, N-terminal domain"/>
    <property type="match status" value="1"/>
</dbReference>
<dbReference type="SUPFAM" id="SSF51735">
    <property type="entry name" value="NAD(P)-binding Rossmann-fold domains"/>
    <property type="match status" value="1"/>
</dbReference>
<feature type="chain" id="PRO_1000185639" description="Quinate/shikimate dehydrogenase">
    <location>
        <begin position="1"/>
        <end position="288"/>
    </location>
</feature>
<feature type="binding site" evidence="1">
    <location>
        <position position="71"/>
    </location>
    <ligand>
        <name>substrate</name>
    </ligand>
</feature>
<feature type="binding site" evidence="1">
    <location>
        <position position="107"/>
    </location>
    <ligand>
        <name>substrate</name>
    </ligand>
</feature>
<feature type="binding site" evidence="1">
    <location>
        <begin position="132"/>
        <end position="135"/>
    </location>
    <ligand>
        <name>NAD(+)</name>
        <dbReference type="ChEBI" id="CHEBI:57540"/>
    </ligand>
</feature>
<feature type="binding site" evidence="1">
    <location>
        <begin position="155"/>
        <end position="158"/>
    </location>
    <ligand>
        <name>NAD(+)</name>
        <dbReference type="ChEBI" id="CHEBI:57540"/>
    </ligand>
</feature>
<feature type="binding site" evidence="1">
    <location>
        <position position="205"/>
    </location>
    <ligand>
        <name>NAD(+)</name>
        <dbReference type="ChEBI" id="CHEBI:57540"/>
    </ligand>
</feature>
<feature type="binding site" evidence="1">
    <location>
        <begin position="232"/>
        <end position="235"/>
    </location>
    <ligand>
        <name>NAD(+)</name>
        <dbReference type="ChEBI" id="CHEBI:57540"/>
    </ligand>
</feature>
<feature type="binding site" evidence="1">
    <location>
        <position position="255"/>
    </location>
    <ligand>
        <name>NAD(+)</name>
        <dbReference type="ChEBI" id="CHEBI:57540"/>
    </ligand>
</feature>
<organism>
    <name type="scientific">Escherichia coli O81 (strain ED1a)</name>
    <dbReference type="NCBI Taxonomy" id="585397"/>
    <lineage>
        <taxon>Bacteria</taxon>
        <taxon>Pseudomonadati</taxon>
        <taxon>Pseudomonadota</taxon>
        <taxon>Gammaproteobacteria</taxon>
        <taxon>Enterobacterales</taxon>
        <taxon>Enterobacteriaceae</taxon>
        <taxon>Escherichia</taxon>
    </lineage>
</organism>
<reference key="1">
    <citation type="journal article" date="2009" name="PLoS Genet.">
        <title>Organised genome dynamics in the Escherichia coli species results in highly diverse adaptive paths.</title>
        <authorList>
            <person name="Touchon M."/>
            <person name="Hoede C."/>
            <person name="Tenaillon O."/>
            <person name="Barbe V."/>
            <person name="Baeriswyl S."/>
            <person name="Bidet P."/>
            <person name="Bingen E."/>
            <person name="Bonacorsi S."/>
            <person name="Bouchier C."/>
            <person name="Bouvet O."/>
            <person name="Calteau A."/>
            <person name="Chiapello H."/>
            <person name="Clermont O."/>
            <person name="Cruveiller S."/>
            <person name="Danchin A."/>
            <person name="Diard M."/>
            <person name="Dossat C."/>
            <person name="Karoui M.E."/>
            <person name="Frapy E."/>
            <person name="Garry L."/>
            <person name="Ghigo J.M."/>
            <person name="Gilles A.M."/>
            <person name="Johnson J."/>
            <person name="Le Bouguenec C."/>
            <person name="Lescat M."/>
            <person name="Mangenot S."/>
            <person name="Martinez-Jehanne V."/>
            <person name="Matic I."/>
            <person name="Nassif X."/>
            <person name="Oztas S."/>
            <person name="Petit M.A."/>
            <person name="Pichon C."/>
            <person name="Rouy Z."/>
            <person name="Ruf C.S."/>
            <person name="Schneider D."/>
            <person name="Tourret J."/>
            <person name="Vacherie B."/>
            <person name="Vallenet D."/>
            <person name="Medigue C."/>
            <person name="Rocha E.P.C."/>
            <person name="Denamur E."/>
        </authorList>
    </citation>
    <scope>NUCLEOTIDE SEQUENCE [LARGE SCALE GENOMIC DNA]</scope>
    <source>
        <strain>ED1a</strain>
    </source>
</reference>
<name>YDIB_ECO81</name>
<proteinExistence type="inferred from homology"/>
<evidence type="ECO:0000255" key="1">
    <source>
        <dbReference type="HAMAP-Rule" id="MF_01578"/>
    </source>
</evidence>
<gene>
    <name evidence="1" type="primary">ydiB</name>
    <name type="ordered locus">ECED1_1891</name>
</gene>
<accession>B7MVG8</accession>
<protein>
    <recommendedName>
        <fullName evidence="1">Quinate/shikimate dehydrogenase</fullName>
        <ecNumber evidence="1">1.1.1.282</ecNumber>
    </recommendedName>
    <alternativeName>
        <fullName evidence="1">NAD-dependent shikimate 5-dehydrogenase</fullName>
    </alternativeName>
</protein>
<keyword id="KW-0028">Amino-acid biosynthesis</keyword>
<keyword id="KW-0057">Aromatic amino acid biosynthesis</keyword>
<keyword id="KW-0520">NAD</keyword>
<keyword id="KW-0521">NADP</keyword>
<keyword id="KW-0560">Oxidoreductase</keyword>
<sequence>MDVTAKYELIGLMAYPIRHSLSPEMQNKALEKAGLPFTYMAFEVDNDSFPGAIEGLKALKMRGTGVSMPNKQLACEYVDELTPAAKLVGAINTIVNDDGYLRGYNTDGTGHIRAIKESGFDIKGKTMVLLGAGGASTAIGAQGAIEGLKEIKLFNRRDEFFDKALAFAQRVNENTDCVVTVTDLADQQAFAEALASADILTNGTKVGMKPLENESLVNDISLLHPGLLVTECVYNPHMTKLLQQAQQAGCKTIDGYGMLLWQGAEQFTLWTGKDFPLEYVKQVMGFGA</sequence>
<comment type="function">
    <text evidence="1">The actual biological function of YdiB remains unclear, nor is it known whether 3-dehydroshikimate or quinate represents the natural substrate. Catalyzes the reversible NAD-dependent reduction of both 3-dehydroshikimate (DHSA) and 3-dehydroquinate to yield shikimate (SA) and quinate, respectively. It can use both NAD or NADP for catalysis, however it has higher catalytic efficiency with NAD.</text>
</comment>
<comment type="catalytic activity">
    <reaction evidence="1">
        <text>L-quinate + NAD(+) = 3-dehydroquinate + NADH + H(+)</text>
        <dbReference type="Rhea" id="RHEA:22364"/>
        <dbReference type="ChEBI" id="CHEBI:15378"/>
        <dbReference type="ChEBI" id="CHEBI:29751"/>
        <dbReference type="ChEBI" id="CHEBI:32364"/>
        <dbReference type="ChEBI" id="CHEBI:57540"/>
        <dbReference type="ChEBI" id="CHEBI:57945"/>
        <dbReference type="EC" id="1.1.1.282"/>
    </reaction>
</comment>
<comment type="catalytic activity">
    <reaction evidence="1">
        <text>L-quinate + NADP(+) = 3-dehydroquinate + NADPH + H(+)</text>
        <dbReference type="Rhea" id="RHEA:18425"/>
        <dbReference type="ChEBI" id="CHEBI:15378"/>
        <dbReference type="ChEBI" id="CHEBI:29751"/>
        <dbReference type="ChEBI" id="CHEBI:32364"/>
        <dbReference type="ChEBI" id="CHEBI:57783"/>
        <dbReference type="ChEBI" id="CHEBI:58349"/>
        <dbReference type="EC" id="1.1.1.282"/>
    </reaction>
</comment>
<comment type="catalytic activity">
    <reaction evidence="1">
        <text>shikimate + NADP(+) = 3-dehydroshikimate + NADPH + H(+)</text>
        <dbReference type="Rhea" id="RHEA:17737"/>
        <dbReference type="ChEBI" id="CHEBI:15378"/>
        <dbReference type="ChEBI" id="CHEBI:16630"/>
        <dbReference type="ChEBI" id="CHEBI:36208"/>
        <dbReference type="ChEBI" id="CHEBI:57783"/>
        <dbReference type="ChEBI" id="CHEBI:58349"/>
        <dbReference type="EC" id="1.1.1.282"/>
    </reaction>
</comment>
<comment type="catalytic activity">
    <reaction evidence="1">
        <text>shikimate + NAD(+) = 3-dehydroshikimate + NADH + H(+)</text>
        <dbReference type="Rhea" id="RHEA:17741"/>
        <dbReference type="ChEBI" id="CHEBI:15378"/>
        <dbReference type="ChEBI" id="CHEBI:16630"/>
        <dbReference type="ChEBI" id="CHEBI:36208"/>
        <dbReference type="ChEBI" id="CHEBI:57540"/>
        <dbReference type="ChEBI" id="CHEBI:57945"/>
        <dbReference type="EC" id="1.1.1.282"/>
    </reaction>
</comment>
<comment type="pathway">
    <text evidence="1">Metabolic intermediate biosynthesis; chorismate biosynthesis; chorismate from D-erythrose 4-phosphate and phosphoenolpyruvate: step 4/7.</text>
</comment>
<comment type="subunit">
    <text evidence="1">Homodimer.</text>
</comment>
<comment type="similarity">
    <text evidence="1">Belongs to the shikimate dehydrogenase family.</text>
</comment>